<evidence type="ECO:0000255" key="1">
    <source>
        <dbReference type="HAMAP-Rule" id="MF_00911"/>
    </source>
</evidence>
<evidence type="ECO:0000255" key="2">
    <source>
        <dbReference type="PROSITE-ProRule" id="PRU01115"/>
    </source>
</evidence>
<evidence type="ECO:0000256" key="3">
    <source>
        <dbReference type="SAM" id="MobiDB-lite"/>
    </source>
</evidence>
<dbReference type="EMBL" id="AE000516">
    <property type="protein sequence ID" value="AAK46494.1"/>
    <property type="molecule type" value="Genomic_DNA"/>
</dbReference>
<dbReference type="PIR" id="C70579">
    <property type="entry name" value="C70579"/>
</dbReference>
<dbReference type="RefSeq" id="WP_003411157.1">
    <property type="nucleotide sequence ID" value="NZ_KK341227.1"/>
</dbReference>
<dbReference type="SMR" id="P9WNA0"/>
<dbReference type="KEGG" id="mtc:MT2210"/>
<dbReference type="PATRIC" id="fig|83331.31.peg.2383"/>
<dbReference type="HOGENOM" id="CLU_047677_1_2_11"/>
<dbReference type="Proteomes" id="UP000001020">
    <property type="component" value="Chromosome"/>
</dbReference>
<dbReference type="GO" id="GO:0032153">
    <property type="term" value="C:cell division site"/>
    <property type="evidence" value="ECO:0007669"/>
    <property type="project" value="UniProtKB-UniRule"/>
</dbReference>
<dbReference type="GO" id="GO:0005886">
    <property type="term" value="C:plasma membrane"/>
    <property type="evidence" value="ECO:0007669"/>
    <property type="project" value="UniProtKB-SubCell"/>
</dbReference>
<dbReference type="GO" id="GO:0090529">
    <property type="term" value="P:cell septum assembly"/>
    <property type="evidence" value="ECO:0007669"/>
    <property type="project" value="InterPro"/>
</dbReference>
<dbReference type="GO" id="GO:0043093">
    <property type="term" value="P:FtsZ-dependent cytokinesis"/>
    <property type="evidence" value="ECO:0007669"/>
    <property type="project" value="UniProtKB-UniRule"/>
</dbReference>
<dbReference type="FunFam" id="3.10.20.310:FF:000021">
    <property type="entry name" value="Cell division protein FtsQ"/>
    <property type="match status" value="1"/>
</dbReference>
<dbReference type="Gene3D" id="3.10.20.310">
    <property type="entry name" value="membrane protein fhac"/>
    <property type="match status" value="1"/>
</dbReference>
<dbReference type="HAMAP" id="MF_00911">
    <property type="entry name" value="FtsQ_subfam"/>
    <property type="match status" value="1"/>
</dbReference>
<dbReference type="InterPro" id="IPR005548">
    <property type="entry name" value="Cell_div_FtsQ/DivIB_C"/>
</dbReference>
<dbReference type="InterPro" id="IPR026579">
    <property type="entry name" value="FtsQ"/>
</dbReference>
<dbReference type="InterPro" id="IPR050487">
    <property type="entry name" value="FtsQ_DivIB"/>
</dbReference>
<dbReference type="InterPro" id="IPR034746">
    <property type="entry name" value="POTRA"/>
</dbReference>
<dbReference type="InterPro" id="IPR013685">
    <property type="entry name" value="POTRA_FtsQ_type"/>
</dbReference>
<dbReference type="PANTHER" id="PTHR37820">
    <property type="entry name" value="CELL DIVISION PROTEIN DIVIB"/>
    <property type="match status" value="1"/>
</dbReference>
<dbReference type="PANTHER" id="PTHR37820:SF1">
    <property type="entry name" value="CELL DIVISION PROTEIN FTSQ"/>
    <property type="match status" value="1"/>
</dbReference>
<dbReference type="Pfam" id="PF03799">
    <property type="entry name" value="FtsQ_DivIB_C"/>
    <property type="match status" value="1"/>
</dbReference>
<dbReference type="Pfam" id="PF08478">
    <property type="entry name" value="POTRA_1"/>
    <property type="match status" value="1"/>
</dbReference>
<dbReference type="PROSITE" id="PS51779">
    <property type="entry name" value="POTRA"/>
    <property type="match status" value="1"/>
</dbReference>
<organism>
    <name type="scientific">Mycobacterium tuberculosis (strain CDC 1551 / Oshkosh)</name>
    <dbReference type="NCBI Taxonomy" id="83331"/>
    <lineage>
        <taxon>Bacteria</taxon>
        <taxon>Bacillati</taxon>
        <taxon>Actinomycetota</taxon>
        <taxon>Actinomycetes</taxon>
        <taxon>Mycobacteriales</taxon>
        <taxon>Mycobacteriaceae</taxon>
        <taxon>Mycobacterium</taxon>
        <taxon>Mycobacterium tuberculosis complex</taxon>
    </lineage>
</organism>
<sequence length="314" mass="33934">MTEHNEDPQIERVADDAADEEAVTEPLATESKDEPAEHPEFEGPRRRARRERAERRAAQARATAIEQARRAAKRRARGQIVSEQNPAKPAARGVVRGLKALLATVVLAVVGIGLGLALYFTPAMSAREIVIIGIGAVSREEVLDAARVRPATPLLQIDTQQVADRVATIRRVASARVQRQYPSALRITIVERVPVVVKDFSDGPHLFDRDGVDFATDPPPPALPYFDVDNPGPSDPTTKAALQVLTALHPEVASQVGRIAAPSVASITLTLADGRVVIWGTTDRCEEKAEKLAALLTQPGRTYDVSSPDLPTVK</sequence>
<protein>
    <recommendedName>
        <fullName evidence="1">Cell division protein FtsQ</fullName>
    </recommendedName>
</protein>
<gene>
    <name evidence="1" type="primary">ftsQ</name>
    <name type="ordered locus">MT2210</name>
</gene>
<proteinExistence type="inferred from homology"/>
<accession>P9WNA0</accession>
<accession>L0TBG9</accession>
<accession>O06226</accession>
<accession>P64168</accession>
<name>FTSQ_MYCTO</name>
<keyword id="KW-0131">Cell cycle</keyword>
<keyword id="KW-0132">Cell division</keyword>
<keyword id="KW-1003">Cell membrane</keyword>
<keyword id="KW-0472">Membrane</keyword>
<keyword id="KW-1185">Reference proteome</keyword>
<keyword id="KW-0812">Transmembrane</keyword>
<keyword id="KW-1133">Transmembrane helix</keyword>
<feature type="chain" id="PRO_0000427163" description="Cell division protein FtsQ">
    <location>
        <begin position="1"/>
        <end position="314"/>
    </location>
</feature>
<feature type="topological domain" description="Cytoplasmic" evidence="1">
    <location>
        <begin position="1"/>
        <end position="99"/>
    </location>
</feature>
<feature type="transmembrane region" description="Helical" evidence="1">
    <location>
        <begin position="100"/>
        <end position="120"/>
    </location>
</feature>
<feature type="topological domain" description="Extracellular" evidence="1">
    <location>
        <begin position="121"/>
        <end position="314"/>
    </location>
</feature>
<feature type="domain" description="POTRA" evidence="2">
    <location>
        <begin position="124"/>
        <end position="192"/>
    </location>
</feature>
<feature type="region of interest" description="Disordered" evidence="3">
    <location>
        <begin position="1"/>
        <end position="57"/>
    </location>
</feature>
<feature type="compositionally biased region" description="Basic and acidic residues" evidence="3">
    <location>
        <begin position="1"/>
        <end position="15"/>
    </location>
</feature>
<feature type="compositionally biased region" description="Basic and acidic residues" evidence="3">
    <location>
        <begin position="30"/>
        <end position="57"/>
    </location>
</feature>
<reference key="1">
    <citation type="journal article" date="2002" name="J. Bacteriol.">
        <title>Whole-genome comparison of Mycobacterium tuberculosis clinical and laboratory strains.</title>
        <authorList>
            <person name="Fleischmann R.D."/>
            <person name="Alland D."/>
            <person name="Eisen J.A."/>
            <person name="Carpenter L."/>
            <person name="White O."/>
            <person name="Peterson J.D."/>
            <person name="DeBoy R.T."/>
            <person name="Dodson R.J."/>
            <person name="Gwinn M.L."/>
            <person name="Haft D.H."/>
            <person name="Hickey E.K."/>
            <person name="Kolonay J.F."/>
            <person name="Nelson W.C."/>
            <person name="Umayam L.A."/>
            <person name="Ermolaeva M.D."/>
            <person name="Salzberg S.L."/>
            <person name="Delcher A."/>
            <person name="Utterback T.R."/>
            <person name="Weidman J.F."/>
            <person name="Khouri H.M."/>
            <person name="Gill J."/>
            <person name="Mikula A."/>
            <person name="Bishai W."/>
            <person name="Jacobs W.R. Jr."/>
            <person name="Venter J.C."/>
            <person name="Fraser C.M."/>
        </authorList>
    </citation>
    <scope>NUCLEOTIDE SEQUENCE [LARGE SCALE GENOMIC DNA]</scope>
    <source>
        <strain>CDC 1551 / Oshkosh</strain>
    </source>
</reference>
<comment type="function">
    <text evidence="1">Essential cell division protein.</text>
</comment>
<comment type="subcellular location">
    <subcellularLocation>
        <location evidence="1">Cell membrane</location>
        <topology evidence="1">Single-pass type II membrane protein</topology>
    </subcellularLocation>
    <text evidence="1">Localizes to the division septum.</text>
</comment>
<comment type="similarity">
    <text evidence="1">Belongs to the FtsQ/DivIB family. FtsQ subfamily.</text>
</comment>